<comment type="function">
    <text evidence="1">RuBisCO catalyzes two reactions: the carboxylation of D-ribulose 1,5-bisphosphate, the primary event in carbon dioxide fixation, as well as the oxidative fragmentation of the pentose substrate. Both reactions occur simultaneously and in competition at the same active site. Although the small subunit is not catalytic it is essential for maximal activity.</text>
</comment>
<comment type="subunit">
    <text evidence="1">Heterohexadecamer of 8 large and 8 small subunits.</text>
</comment>
<comment type="subcellular location">
    <subcellularLocation>
        <location evidence="1">Plastid</location>
        <location evidence="1">Chloroplast</location>
    </subcellularLocation>
</comment>
<comment type="induction">
    <text evidence="2">No expression of this mRNA was seen in leaves.</text>
</comment>
<comment type="miscellaneous">
    <text evidence="1">The basic functional RuBisCO is composed of a large chain homodimer in a 'head-to-tail' conformation. In form I RuBisCO this homodimer is arranged in a barrel-like tetramer with the small subunits forming a tetrameric 'cap' on each end of the 'barrel'.</text>
</comment>
<comment type="similarity">
    <text evidence="1">Belongs to the RuBisCO small chain family.</text>
</comment>
<sequence>MASSMLSNAAVATTAASRSAGAQASMVAPFTGLKSVSAFPVTRKSSNDLSTVPSNGGKVQCMQVWPPLGKKKFETLSYLPPLSEESLLKEVQYLLNNGWVPCLEFEPTHGFVYREHGNTPGYYDGRYWTMWKLPMFGCTDPSQVVAELEEAKKAYPEAFIRIIGFDNVRQVQCVSFIAYKPASYDA</sequence>
<organism>
    <name type="scientific">Mesembryanthemum crystallinum</name>
    <name type="common">Common ice plant</name>
    <name type="synonym">Cryophytum crystallinum</name>
    <dbReference type="NCBI Taxonomy" id="3544"/>
    <lineage>
        <taxon>Eukaryota</taxon>
        <taxon>Viridiplantae</taxon>
        <taxon>Streptophyta</taxon>
        <taxon>Embryophyta</taxon>
        <taxon>Tracheophyta</taxon>
        <taxon>Spermatophyta</taxon>
        <taxon>Magnoliopsida</taxon>
        <taxon>eudicotyledons</taxon>
        <taxon>Gunneridae</taxon>
        <taxon>Pentapetalae</taxon>
        <taxon>Caryophyllales</taxon>
        <taxon>Aizoaceae</taxon>
        <taxon>Mesembryanthemum</taxon>
        <taxon>Mesembryanthemum subgen. Cryophytum</taxon>
    </lineage>
</organism>
<name>RBS6_MESCR</name>
<gene>
    <name evidence="1" type="primary">RBCS6</name>
    <name evidence="3" type="synonym">RBCS-6</name>
</gene>
<protein>
    <recommendedName>
        <fullName evidence="1">Ribulose bisphosphate carboxylase small subunit, chloroplastic 6</fullName>
        <shortName evidence="1">RuBisCO small subunit 6</shortName>
    </recommendedName>
</protein>
<accession>Q08186</accession>
<reference key="1">
    <citation type="journal article" date="1993" name="Mol. Gen. Genet.">
        <title>The six genes of the Rubisco small subunit multigene family from Mesembryanthemum crystallinum, a facultative CAM plant.</title>
        <authorList>
            <person name="Derocher E.J."/>
            <person name="Quigley F."/>
            <person name="Mache R."/>
            <person name="Bohnert H.J."/>
        </authorList>
    </citation>
    <scope>NUCLEOTIDE SEQUENCE</scope>
    <scope>INDUCTION</scope>
</reference>
<feature type="transit peptide" description="Chloroplast" evidence="1">
    <location>
        <begin position="1"/>
        <end position="60"/>
    </location>
</feature>
<feature type="chain" id="PRO_0000031532" description="Ribulose bisphosphate carboxylase small subunit, chloroplastic 6" evidence="1">
    <location>
        <begin position="61"/>
        <end position="186"/>
    </location>
</feature>
<evidence type="ECO:0000255" key="1">
    <source>
        <dbReference type="HAMAP-Rule" id="MF_00860"/>
    </source>
</evidence>
<evidence type="ECO:0000269" key="2">
    <source>
    </source>
</evidence>
<evidence type="ECO:0000303" key="3">
    <source>
    </source>
</evidence>
<keyword id="KW-0113">Calvin cycle</keyword>
<keyword id="KW-0120">Carbon dioxide fixation</keyword>
<keyword id="KW-0150">Chloroplast</keyword>
<keyword id="KW-0601">Photorespiration</keyword>
<keyword id="KW-0602">Photosynthesis</keyword>
<keyword id="KW-0934">Plastid</keyword>
<keyword id="KW-0809">Transit peptide</keyword>
<proteinExistence type="evidence at transcript level"/>
<dbReference type="EMBL" id="L10213">
    <property type="protein sequence ID" value="AAA03698.1"/>
    <property type="molecule type" value="Unassigned_DNA"/>
</dbReference>
<dbReference type="PIR" id="S35242">
    <property type="entry name" value="S35242"/>
</dbReference>
<dbReference type="SMR" id="Q08186"/>
<dbReference type="GO" id="GO:0009507">
    <property type="term" value="C:chloroplast"/>
    <property type="evidence" value="ECO:0007669"/>
    <property type="project" value="UniProtKB-SubCell"/>
</dbReference>
<dbReference type="GO" id="GO:0016984">
    <property type="term" value="F:ribulose-bisphosphate carboxylase activity"/>
    <property type="evidence" value="ECO:0007669"/>
    <property type="project" value="UniProtKB-UniRule"/>
</dbReference>
<dbReference type="GO" id="GO:0009853">
    <property type="term" value="P:photorespiration"/>
    <property type="evidence" value="ECO:0007669"/>
    <property type="project" value="UniProtKB-KW"/>
</dbReference>
<dbReference type="GO" id="GO:0019253">
    <property type="term" value="P:reductive pentose-phosphate cycle"/>
    <property type="evidence" value="ECO:0007669"/>
    <property type="project" value="UniProtKB-UniRule"/>
</dbReference>
<dbReference type="CDD" id="cd03527">
    <property type="entry name" value="RuBisCO_small"/>
    <property type="match status" value="1"/>
</dbReference>
<dbReference type="FunFam" id="3.30.190.10:FF:000001">
    <property type="entry name" value="Ribulose bisphosphate carboxylase small chain, chloroplastic"/>
    <property type="match status" value="1"/>
</dbReference>
<dbReference type="Gene3D" id="3.30.190.10">
    <property type="entry name" value="Ribulose bisphosphate carboxylase, small subunit"/>
    <property type="match status" value="1"/>
</dbReference>
<dbReference type="HAMAP" id="MF_00859">
    <property type="entry name" value="RuBisCO_S_bact"/>
    <property type="match status" value="1"/>
</dbReference>
<dbReference type="InterPro" id="IPR024681">
    <property type="entry name" value="RuBisCO_ssu"/>
</dbReference>
<dbReference type="InterPro" id="IPR000894">
    <property type="entry name" value="RuBisCO_ssu_dom"/>
</dbReference>
<dbReference type="InterPro" id="IPR024680">
    <property type="entry name" value="RuBisCO_ssu_N"/>
</dbReference>
<dbReference type="InterPro" id="IPR036385">
    <property type="entry name" value="RuBisCO_ssu_sf"/>
</dbReference>
<dbReference type="PANTHER" id="PTHR31262">
    <property type="entry name" value="RIBULOSE BISPHOSPHATE CARBOXYLASE SMALL CHAIN 1, CHLOROPLASTIC"/>
    <property type="match status" value="1"/>
</dbReference>
<dbReference type="PANTHER" id="PTHR31262:SF10">
    <property type="entry name" value="RIBULOSE BISPHOSPHATE CARBOXYLASE SMALL SUBUNIT 1A, CHLOROPLASTIC-RELATED"/>
    <property type="match status" value="1"/>
</dbReference>
<dbReference type="Pfam" id="PF12338">
    <property type="entry name" value="RbcS"/>
    <property type="match status" value="1"/>
</dbReference>
<dbReference type="Pfam" id="PF00101">
    <property type="entry name" value="RuBisCO_small"/>
    <property type="match status" value="1"/>
</dbReference>
<dbReference type="PRINTS" id="PR00152">
    <property type="entry name" value="RUBISCOSMALL"/>
</dbReference>
<dbReference type="SMART" id="SM00961">
    <property type="entry name" value="RuBisCO_small"/>
    <property type="match status" value="1"/>
</dbReference>
<dbReference type="SUPFAM" id="SSF55239">
    <property type="entry name" value="RuBisCO, small subunit"/>
    <property type="match status" value="1"/>
</dbReference>